<organism>
    <name type="scientific">Vitis vinifera</name>
    <name type="common">Grape</name>
    <dbReference type="NCBI Taxonomy" id="29760"/>
    <lineage>
        <taxon>Eukaryota</taxon>
        <taxon>Viridiplantae</taxon>
        <taxon>Streptophyta</taxon>
        <taxon>Embryophyta</taxon>
        <taxon>Tracheophyta</taxon>
        <taxon>Spermatophyta</taxon>
        <taxon>Magnoliopsida</taxon>
        <taxon>eudicotyledons</taxon>
        <taxon>Gunneridae</taxon>
        <taxon>Pentapetalae</taxon>
        <taxon>rosids</taxon>
        <taxon>Vitales</taxon>
        <taxon>Vitaceae</taxon>
        <taxon>Viteae</taxon>
        <taxon>Vitis</taxon>
    </lineage>
</organism>
<proteinExistence type="evidence at transcript level"/>
<accession>A7PA04</accession>
<accession>A5C9I1</accession>
<accession>F6H448</accession>
<keyword id="KW-1003">Cell membrane</keyword>
<keyword id="KW-0472">Membrane</keyword>
<keyword id="KW-1185">Reference proteome</keyword>
<keyword id="KW-0812">Transmembrane</keyword>
<keyword id="KW-1133">Transmembrane helix</keyword>
<gene>
    <name type="ordered locus">VIT_14s0068g01400</name>
    <name type="ORF">GSVIVT00037922001</name>
    <name type="ORF">GSVIVT01033020001</name>
    <name type="ORF">VIT_00033020001</name>
    <name type="ORF">VITISV_043317</name>
    <name type="ORF">Vv14s0068g01400</name>
</gene>
<evidence type="ECO:0000250" key="1"/>
<evidence type="ECO:0000255" key="2"/>
<evidence type="ECO:0000305" key="3"/>
<dbReference type="EMBL" id="FN595232">
    <property type="protein sequence ID" value="CCB46992.1"/>
    <property type="status" value="ALT_SEQ"/>
    <property type="molecule type" value="Genomic_DNA"/>
</dbReference>
<dbReference type="EMBL" id="FN597038">
    <property type="status" value="NOT_ANNOTATED_CDS"/>
    <property type="molecule type" value="Genomic_DNA"/>
</dbReference>
<dbReference type="EMBL" id="AM487000">
    <property type="protein sequence ID" value="CAN77740.1"/>
    <property type="molecule type" value="Genomic_DNA"/>
</dbReference>
<dbReference type="EMBL" id="EC973652">
    <property type="status" value="NOT_ANNOTATED_CDS"/>
    <property type="molecule type" value="mRNA"/>
</dbReference>
<dbReference type="RefSeq" id="XP_002274297.1">
    <property type="nucleotide sequence ID" value="XM_002274261.3"/>
</dbReference>
<dbReference type="STRING" id="29760.A7PA04"/>
<dbReference type="PaxDb" id="29760-VIT_14s0068g01400.t01"/>
<dbReference type="eggNOG" id="ENOG502S695">
    <property type="taxonomic scope" value="Eukaryota"/>
</dbReference>
<dbReference type="HOGENOM" id="CLU_066104_3_0_1"/>
<dbReference type="InParanoid" id="A7PA04"/>
<dbReference type="OrthoDB" id="992805at2759"/>
<dbReference type="Proteomes" id="UP000009183">
    <property type="component" value="Chromosome 14"/>
</dbReference>
<dbReference type="GO" id="GO:0005886">
    <property type="term" value="C:plasma membrane"/>
    <property type="evidence" value="ECO:0007669"/>
    <property type="project" value="UniProtKB-SubCell"/>
</dbReference>
<dbReference type="InterPro" id="IPR006459">
    <property type="entry name" value="CASP/CASPL"/>
</dbReference>
<dbReference type="InterPro" id="IPR006702">
    <property type="entry name" value="CASP_dom"/>
</dbReference>
<dbReference type="InterPro" id="IPR044173">
    <property type="entry name" value="CASPL"/>
</dbReference>
<dbReference type="NCBIfam" id="TIGR01569">
    <property type="entry name" value="A_tha_TIGR01569"/>
    <property type="match status" value="1"/>
</dbReference>
<dbReference type="PANTHER" id="PTHR36488">
    <property type="entry name" value="CASP-LIKE PROTEIN 1U1"/>
    <property type="match status" value="1"/>
</dbReference>
<dbReference type="PANTHER" id="PTHR36488:SF8">
    <property type="entry name" value="CASP-LIKE PROTEIN 1U1"/>
    <property type="match status" value="1"/>
</dbReference>
<dbReference type="Pfam" id="PF04535">
    <property type="entry name" value="CASP_dom"/>
    <property type="match status" value="1"/>
</dbReference>
<protein>
    <recommendedName>
        <fullName>CASP-like protein 1F2</fullName>
        <shortName>VvCASPL1F2</shortName>
    </recommendedName>
</protein>
<reference key="1">
    <citation type="journal article" date="2007" name="Nature">
        <title>The grapevine genome sequence suggests ancestral hexaploidization in major angiosperm phyla.</title>
        <authorList>
            <person name="Jaillon O."/>
            <person name="Aury J.-M."/>
            <person name="Noel B."/>
            <person name="Policriti A."/>
            <person name="Clepet C."/>
            <person name="Casagrande A."/>
            <person name="Choisne N."/>
            <person name="Aubourg S."/>
            <person name="Vitulo N."/>
            <person name="Jubin C."/>
            <person name="Vezzi A."/>
            <person name="Legeai F."/>
            <person name="Hugueney P."/>
            <person name="Dasilva C."/>
            <person name="Horner D."/>
            <person name="Mica E."/>
            <person name="Jublot D."/>
            <person name="Poulain J."/>
            <person name="Bruyere C."/>
            <person name="Billault A."/>
            <person name="Segurens B."/>
            <person name="Gouyvenoux M."/>
            <person name="Ugarte E."/>
            <person name="Cattonaro F."/>
            <person name="Anthouard V."/>
            <person name="Vico V."/>
            <person name="Del Fabbro C."/>
            <person name="Alaux M."/>
            <person name="Di Gaspero G."/>
            <person name="Dumas V."/>
            <person name="Felice N."/>
            <person name="Paillard S."/>
            <person name="Juman I."/>
            <person name="Moroldo M."/>
            <person name="Scalabrin S."/>
            <person name="Canaguier A."/>
            <person name="Le Clainche I."/>
            <person name="Malacrida G."/>
            <person name="Durand E."/>
            <person name="Pesole G."/>
            <person name="Laucou V."/>
            <person name="Chatelet P."/>
            <person name="Merdinoglu D."/>
            <person name="Delledonne M."/>
            <person name="Pezzotti M."/>
            <person name="Lecharny A."/>
            <person name="Scarpelli C."/>
            <person name="Artiguenave F."/>
            <person name="Pe M.E."/>
            <person name="Valle G."/>
            <person name="Morgante M."/>
            <person name="Caboche M."/>
            <person name="Adam-Blondon A.-F."/>
            <person name="Weissenbach J."/>
            <person name="Quetier F."/>
            <person name="Wincker P."/>
        </authorList>
    </citation>
    <scope>NUCLEOTIDE SEQUENCE [LARGE SCALE GENOMIC DNA]</scope>
    <source>
        <strain>cv. Pinot noir / PN40024</strain>
    </source>
</reference>
<reference key="2">
    <citation type="journal article" date="2007" name="PLoS ONE">
        <title>A high quality draft consensus sequence of the genome of a heterozygous grapevine variety.</title>
        <authorList>
            <person name="Velasco R."/>
            <person name="Zharkikh A."/>
            <person name="Troggio M."/>
            <person name="Cartwright D.A."/>
            <person name="Cestaro A."/>
            <person name="Pruss D."/>
            <person name="Pindo M."/>
            <person name="FitzGerald L.M."/>
            <person name="Vezzulli S."/>
            <person name="Reid J."/>
            <person name="Malacarne G."/>
            <person name="Iliev D."/>
            <person name="Coppola G."/>
            <person name="Wardell B."/>
            <person name="Micheletti D."/>
            <person name="Macalma T."/>
            <person name="Facci M."/>
            <person name="Mitchell J.T."/>
            <person name="Perazzolli M."/>
            <person name="Eldredge G."/>
            <person name="Gatto P."/>
            <person name="Oyzerski R."/>
            <person name="Moretto M."/>
            <person name="Gutin N."/>
            <person name="Stefanini M."/>
            <person name="Chen Y."/>
            <person name="Segala C."/>
            <person name="Davenport C."/>
            <person name="Dematte L."/>
            <person name="Mraz A."/>
            <person name="Battilana J."/>
            <person name="Stormo K."/>
            <person name="Costa F."/>
            <person name="Tao Q."/>
            <person name="Si-Ammour A."/>
            <person name="Harkins T."/>
            <person name="Lackey A."/>
            <person name="Perbost C."/>
            <person name="Taillon B."/>
            <person name="Stella A."/>
            <person name="Solovyev V."/>
            <person name="Fawcett J.A."/>
            <person name="Sterck L."/>
            <person name="Vandepoele K."/>
            <person name="Grando S.M."/>
            <person name="Toppo S."/>
            <person name="Moser C."/>
            <person name="Lanchbury J."/>
            <person name="Bogden R."/>
            <person name="Skolnick M."/>
            <person name="Sgaramella V."/>
            <person name="Bhatnagar S.K."/>
            <person name="Fontana P."/>
            <person name="Gutin A."/>
            <person name="Van de Peer Y."/>
            <person name="Salamini F."/>
            <person name="Viola R."/>
        </authorList>
    </citation>
    <scope>NUCLEOTIDE SEQUENCE [LARGE SCALE GENOMIC DNA]</scope>
    <source>
        <strain>cv. Pinot noir</strain>
    </source>
</reference>
<reference key="3">
    <citation type="journal article" date="2007" name="Gene">
        <title>Generation of ESTs in Vitis vinifera wine grape (Cabernet Sauvignon) and table grape (Muscat Hamburg) and discovery of new candidate genes with potential roles in berry development.</title>
        <authorList>
            <person name="Peng F.Y."/>
            <person name="Reid K.E."/>
            <person name="Liao N."/>
            <person name="Schlosser J."/>
            <person name="Lijavetzky D."/>
            <person name="Holt R."/>
            <person name="Martinez Zapater J.M."/>
            <person name="Jones S."/>
            <person name="Marra M."/>
            <person name="Bohlmann J."/>
            <person name="Lund S.T."/>
        </authorList>
    </citation>
    <scope>NUCLEOTIDE SEQUENCE [LARGE SCALE MRNA]</scope>
    <source>
        <strain>cv. Muscat Hamburg</strain>
        <tissue>Fruit</tissue>
    </source>
</reference>
<reference key="4">
    <citation type="journal article" date="2014" name="Plant Physiol.">
        <title>Functional and evolutionary analysis of the CASPARIAN STRIP MEMBRANE DOMAIN PROTEIN family.</title>
        <authorList>
            <person name="Roppolo D."/>
            <person name="Boeckmann B."/>
            <person name="Pfister A."/>
            <person name="Boutet E."/>
            <person name="Rubio M.C."/>
            <person name="Denervaud-Tendon V."/>
            <person name="Vermeer J.E."/>
            <person name="Gheyselinck J."/>
            <person name="Xenarios I."/>
            <person name="Geldner N."/>
        </authorList>
    </citation>
    <scope>GENE FAMILY</scope>
    <scope>NOMENCLATURE</scope>
</reference>
<name>CSPL6_VITVI</name>
<feature type="chain" id="PRO_0000370308" description="CASP-like protein 1F2">
    <location>
        <begin position="1"/>
        <end position="189"/>
    </location>
</feature>
<feature type="topological domain" description="Cytoplasmic" evidence="2">
    <location>
        <begin position="1"/>
        <end position="27"/>
    </location>
</feature>
<feature type="transmembrane region" description="Helical" evidence="2">
    <location>
        <begin position="28"/>
        <end position="48"/>
    </location>
</feature>
<feature type="topological domain" description="Extracellular" evidence="2">
    <location>
        <begin position="49"/>
        <end position="77"/>
    </location>
</feature>
<feature type="transmembrane region" description="Helical" evidence="2">
    <location>
        <begin position="78"/>
        <end position="98"/>
    </location>
</feature>
<feature type="topological domain" description="Cytoplasmic" evidence="2">
    <location>
        <begin position="99"/>
        <end position="113"/>
    </location>
</feature>
<feature type="transmembrane region" description="Helical" evidence="2">
    <location>
        <begin position="114"/>
        <end position="134"/>
    </location>
</feature>
<feature type="topological domain" description="Extracellular" evidence="2">
    <location>
        <begin position="135"/>
        <end position="156"/>
    </location>
</feature>
<feature type="transmembrane region" description="Helical" evidence="2">
    <location>
        <begin position="157"/>
        <end position="177"/>
    </location>
</feature>
<feature type="topological domain" description="Cytoplasmic" evidence="2">
    <location>
        <begin position="178"/>
        <end position="189"/>
    </location>
</feature>
<feature type="sequence conflict" description="In Ref. 3; EC973652." evidence="3" ref="3">
    <original>I</original>
    <variation>T</variation>
    <location>
        <position position="169"/>
    </location>
</feature>
<comment type="subunit">
    <text evidence="1">Homodimer and heterodimers.</text>
</comment>
<comment type="subcellular location">
    <subcellularLocation>
        <location evidence="1">Cell membrane</location>
        <topology evidence="1">Multi-pass membrane protein</topology>
    </subcellularLocation>
</comment>
<comment type="similarity">
    <text evidence="3">Belongs to the Casparian strip membrane proteins (CASP) family.</text>
</comment>
<comment type="sequence caution" evidence="3">
    <conflict type="erroneous gene model prediction">
        <sequence resource="EMBL-CDS" id="CCB46992"/>
    </conflict>
</comment>
<sequence length="189" mass="20472">MESLEVANGKSSALGVSREASSPPQMGFFIAQVVLRFFTLAFTGAAIAVMVTAKETVEVFSISFTVRYSYLSAFKFLVGADAVVCGFSMLSLIFVSIFNKGKSNHYFFLYFHDLILMVLSMSACAAATAVGYVGRYGQDKAAWMAVCGNVKMFCDKALASILLSLIGFICLFLLTIMAARNLRVSGHLI</sequence>